<sequence>MPKRLDINTILVIGSGPIVIGQAAEFDYSGTQACQSLKEEGYKVILVNSNPATIMTDTATADKVYIEPLTLEFVSRIIRKERPDAILPTLGGQTGLNMAVELAKSGVLDECGVEILGTKLSAIEQAEDRDLFRTLMQDLNEPTPPSEIIHNLDEAYGFVNEIGYPVIVRPAFTLGGTGGGICHNEEELIEIVTSGLKHSPVTQCLLEKSIAGCKEIEYEVMRDSNDNAIVVCNMENIDPVGVHTGDSIVVAPSQTLSDREYQMLRNTSLRIIRALGIEGGCNVQLALDPYSFQYYVIEVNPRVSRSSALASKATGYPIAKLAAKIAVGLTLDEIVNPVTQKTYACFEPALDYVVSKIPRWPFDKFESANRTLGTQMKATGEVMSIGRNLEESLLKAVRSLELGIYHLELDHLKELDKETMKKRIIKADDERLFIVAEAIRQGVTKEEINEWCEMDFFFLQKVENIVNMEREVKANVGNMEVLQIAKEMGFSDHYIAAAWNKTEREIYDMRKENNMMPVFKMVDTCAAEFESATPYYYSTYADENESIVTDRKSVVVLGSGPIRIGQGVEFDYATVHSVWAIKEAGYEAIIINNNPETVSTDFSISDKLYFEPLTIEDVMHIIDLEKPEGVIVQFGGQTAINLAAKLEEHGVKILGTSLEDLDRAEDRDKFEAALTKLGIPQPVGKTATTVEQAVAIAEEIGYPVLVRPSYVLGGRAMEIVYRQEELLHYMKNAVKVHADHPVLIDRYMVGKEIEVDAISDGENVFIPGIMEHIERAGVHSGDSIGVYPPQSLSEKLKEQIIEHTIALGKGLNIVGLLNIQFVVFKDQVYVIEVNPRASRTVPFLSKITGVPMANVATKVILGQDLVEQGYGTGYHPEEKEVYVKAPVFSFAKLRSVDTTLGPEMKSTGEVMGKDLTLEKALYKGLVASGINIPTHGSVIITVADKDKEEAMEIAKRFHEIGYNLLATAGTAQSLEEQNIPVQVVNKIDSEDYNLLDIIRQGKAQFVINTLTKGKQPARDGFRIRRESVENGVACLTSLDTTRAILRVLESMTFSAHSMKEITQTKRHEVVHA</sequence>
<reference key="1">
    <citation type="submission" date="2008-10" db="EMBL/GenBank/DDBJ databases">
        <title>Genome sequence of Bacillus cereus B4264.</title>
        <authorList>
            <person name="Dodson R.J."/>
            <person name="Durkin A.S."/>
            <person name="Rosovitz M.J."/>
            <person name="Rasko D.A."/>
            <person name="Hoffmaster A."/>
            <person name="Ravel J."/>
            <person name="Sutton G."/>
        </authorList>
    </citation>
    <scope>NUCLEOTIDE SEQUENCE [LARGE SCALE GENOMIC DNA]</scope>
    <source>
        <strain>B4264</strain>
    </source>
</reference>
<organism>
    <name type="scientific">Bacillus cereus (strain B4264)</name>
    <dbReference type="NCBI Taxonomy" id="405532"/>
    <lineage>
        <taxon>Bacteria</taxon>
        <taxon>Bacillati</taxon>
        <taxon>Bacillota</taxon>
        <taxon>Bacilli</taxon>
        <taxon>Bacillales</taxon>
        <taxon>Bacillaceae</taxon>
        <taxon>Bacillus</taxon>
        <taxon>Bacillus cereus group</taxon>
    </lineage>
</organism>
<gene>
    <name evidence="1" type="primary">carB</name>
    <name type="ordered locus">BCB4264_A3984</name>
</gene>
<evidence type="ECO:0000255" key="1">
    <source>
        <dbReference type="HAMAP-Rule" id="MF_01210"/>
    </source>
</evidence>
<dbReference type="EC" id="6.3.4.16" evidence="1"/>
<dbReference type="EC" id="6.3.5.5" evidence="1"/>
<dbReference type="EMBL" id="CP001176">
    <property type="protein sequence ID" value="ACK60431.1"/>
    <property type="molecule type" value="Genomic_DNA"/>
</dbReference>
<dbReference type="RefSeq" id="WP_001126099.1">
    <property type="nucleotide sequence ID" value="NC_011725.1"/>
</dbReference>
<dbReference type="SMR" id="B7H6M2"/>
<dbReference type="KEGG" id="bcb:BCB4264_A3984"/>
<dbReference type="HOGENOM" id="CLU_000513_1_0_9"/>
<dbReference type="UniPathway" id="UPA00068">
    <property type="reaction ID" value="UER00171"/>
</dbReference>
<dbReference type="UniPathway" id="UPA00070">
    <property type="reaction ID" value="UER00115"/>
</dbReference>
<dbReference type="Proteomes" id="UP000007096">
    <property type="component" value="Chromosome"/>
</dbReference>
<dbReference type="GO" id="GO:0005737">
    <property type="term" value="C:cytoplasm"/>
    <property type="evidence" value="ECO:0007669"/>
    <property type="project" value="TreeGrafter"/>
</dbReference>
<dbReference type="GO" id="GO:0005524">
    <property type="term" value="F:ATP binding"/>
    <property type="evidence" value="ECO:0007669"/>
    <property type="project" value="UniProtKB-UniRule"/>
</dbReference>
<dbReference type="GO" id="GO:0004087">
    <property type="term" value="F:carbamoyl-phosphate synthase (ammonia) activity"/>
    <property type="evidence" value="ECO:0007669"/>
    <property type="project" value="RHEA"/>
</dbReference>
<dbReference type="GO" id="GO:0004088">
    <property type="term" value="F:carbamoyl-phosphate synthase (glutamine-hydrolyzing) activity"/>
    <property type="evidence" value="ECO:0007669"/>
    <property type="project" value="UniProtKB-UniRule"/>
</dbReference>
<dbReference type="GO" id="GO:0046872">
    <property type="term" value="F:metal ion binding"/>
    <property type="evidence" value="ECO:0007669"/>
    <property type="project" value="UniProtKB-KW"/>
</dbReference>
<dbReference type="GO" id="GO:0044205">
    <property type="term" value="P:'de novo' UMP biosynthetic process"/>
    <property type="evidence" value="ECO:0007669"/>
    <property type="project" value="UniProtKB-UniRule"/>
</dbReference>
<dbReference type="GO" id="GO:0006541">
    <property type="term" value="P:glutamine metabolic process"/>
    <property type="evidence" value="ECO:0007669"/>
    <property type="project" value="TreeGrafter"/>
</dbReference>
<dbReference type="GO" id="GO:0006526">
    <property type="term" value="P:L-arginine biosynthetic process"/>
    <property type="evidence" value="ECO:0007669"/>
    <property type="project" value="UniProtKB-UniRule"/>
</dbReference>
<dbReference type="CDD" id="cd01424">
    <property type="entry name" value="MGS_CPS_II"/>
    <property type="match status" value="1"/>
</dbReference>
<dbReference type="FunFam" id="1.10.1030.10:FF:000002">
    <property type="entry name" value="Carbamoyl-phosphate synthase large chain"/>
    <property type="match status" value="1"/>
</dbReference>
<dbReference type="FunFam" id="3.30.1490.20:FF:000001">
    <property type="entry name" value="Carbamoyl-phosphate synthase large chain"/>
    <property type="match status" value="1"/>
</dbReference>
<dbReference type="FunFam" id="3.30.470.20:FF:000001">
    <property type="entry name" value="Carbamoyl-phosphate synthase large chain"/>
    <property type="match status" value="1"/>
</dbReference>
<dbReference type="FunFam" id="3.30.470.20:FF:000026">
    <property type="entry name" value="Carbamoyl-phosphate synthase large chain"/>
    <property type="match status" value="1"/>
</dbReference>
<dbReference type="FunFam" id="3.40.50.1380:FF:000011">
    <property type="entry name" value="Carbamoyl-phosphate synthase large chain"/>
    <property type="match status" value="1"/>
</dbReference>
<dbReference type="FunFam" id="3.40.50.20:FF:000001">
    <property type="entry name" value="Carbamoyl-phosphate synthase large chain"/>
    <property type="match status" value="2"/>
</dbReference>
<dbReference type="Gene3D" id="3.40.50.20">
    <property type="match status" value="2"/>
</dbReference>
<dbReference type="Gene3D" id="3.30.1490.20">
    <property type="entry name" value="ATP-grasp fold, A domain"/>
    <property type="match status" value="1"/>
</dbReference>
<dbReference type="Gene3D" id="3.30.470.20">
    <property type="entry name" value="ATP-grasp fold, B domain"/>
    <property type="match status" value="2"/>
</dbReference>
<dbReference type="Gene3D" id="1.10.1030.10">
    <property type="entry name" value="Carbamoyl-phosphate synthetase, large subunit oligomerisation domain"/>
    <property type="match status" value="1"/>
</dbReference>
<dbReference type="Gene3D" id="3.40.50.1380">
    <property type="entry name" value="Methylglyoxal synthase-like domain"/>
    <property type="match status" value="1"/>
</dbReference>
<dbReference type="HAMAP" id="MF_01210_A">
    <property type="entry name" value="CPSase_L_chain_A"/>
    <property type="match status" value="1"/>
</dbReference>
<dbReference type="HAMAP" id="MF_01210_B">
    <property type="entry name" value="CPSase_L_chain_B"/>
    <property type="match status" value="1"/>
</dbReference>
<dbReference type="InterPro" id="IPR011761">
    <property type="entry name" value="ATP-grasp"/>
</dbReference>
<dbReference type="InterPro" id="IPR013815">
    <property type="entry name" value="ATP_grasp_subdomain_1"/>
</dbReference>
<dbReference type="InterPro" id="IPR006275">
    <property type="entry name" value="CarbamoylP_synth_lsu"/>
</dbReference>
<dbReference type="InterPro" id="IPR005480">
    <property type="entry name" value="CarbamoylP_synth_lsu_oligo"/>
</dbReference>
<dbReference type="InterPro" id="IPR036897">
    <property type="entry name" value="CarbamoylP_synth_lsu_oligo_sf"/>
</dbReference>
<dbReference type="InterPro" id="IPR005479">
    <property type="entry name" value="CbamoylP_synth_lsu-like_ATP-bd"/>
</dbReference>
<dbReference type="InterPro" id="IPR005483">
    <property type="entry name" value="CbamoylP_synth_lsu_CPSase_dom"/>
</dbReference>
<dbReference type="InterPro" id="IPR011607">
    <property type="entry name" value="MGS-like_dom"/>
</dbReference>
<dbReference type="InterPro" id="IPR036914">
    <property type="entry name" value="MGS-like_dom_sf"/>
</dbReference>
<dbReference type="InterPro" id="IPR033937">
    <property type="entry name" value="MGS_CPS_CarB"/>
</dbReference>
<dbReference type="InterPro" id="IPR016185">
    <property type="entry name" value="PreATP-grasp_dom_sf"/>
</dbReference>
<dbReference type="NCBIfam" id="TIGR01369">
    <property type="entry name" value="CPSaseII_lrg"/>
    <property type="match status" value="1"/>
</dbReference>
<dbReference type="NCBIfam" id="NF003671">
    <property type="entry name" value="PRK05294.1"/>
    <property type="match status" value="1"/>
</dbReference>
<dbReference type="NCBIfam" id="NF009455">
    <property type="entry name" value="PRK12815.1"/>
    <property type="match status" value="1"/>
</dbReference>
<dbReference type="PANTHER" id="PTHR11405:SF53">
    <property type="entry name" value="CARBAMOYL-PHOSPHATE SYNTHASE [AMMONIA], MITOCHONDRIAL"/>
    <property type="match status" value="1"/>
</dbReference>
<dbReference type="PANTHER" id="PTHR11405">
    <property type="entry name" value="CARBAMOYLTRANSFERASE FAMILY MEMBER"/>
    <property type="match status" value="1"/>
</dbReference>
<dbReference type="Pfam" id="PF02786">
    <property type="entry name" value="CPSase_L_D2"/>
    <property type="match status" value="2"/>
</dbReference>
<dbReference type="Pfam" id="PF02787">
    <property type="entry name" value="CPSase_L_D3"/>
    <property type="match status" value="1"/>
</dbReference>
<dbReference type="Pfam" id="PF02142">
    <property type="entry name" value="MGS"/>
    <property type="match status" value="1"/>
</dbReference>
<dbReference type="PRINTS" id="PR00098">
    <property type="entry name" value="CPSASE"/>
</dbReference>
<dbReference type="SMART" id="SM01096">
    <property type="entry name" value="CPSase_L_D3"/>
    <property type="match status" value="1"/>
</dbReference>
<dbReference type="SMART" id="SM01209">
    <property type="entry name" value="GARS_A"/>
    <property type="match status" value="1"/>
</dbReference>
<dbReference type="SMART" id="SM00851">
    <property type="entry name" value="MGS"/>
    <property type="match status" value="1"/>
</dbReference>
<dbReference type="SUPFAM" id="SSF48108">
    <property type="entry name" value="Carbamoyl phosphate synthetase, large subunit connection domain"/>
    <property type="match status" value="1"/>
</dbReference>
<dbReference type="SUPFAM" id="SSF56059">
    <property type="entry name" value="Glutathione synthetase ATP-binding domain-like"/>
    <property type="match status" value="2"/>
</dbReference>
<dbReference type="SUPFAM" id="SSF52335">
    <property type="entry name" value="Methylglyoxal synthase-like"/>
    <property type="match status" value="1"/>
</dbReference>
<dbReference type="SUPFAM" id="SSF52440">
    <property type="entry name" value="PreATP-grasp domain"/>
    <property type="match status" value="2"/>
</dbReference>
<dbReference type="PROSITE" id="PS50975">
    <property type="entry name" value="ATP_GRASP"/>
    <property type="match status" value="2"/>
</dbReference>
<dbReference type="PROSITE" id="PS00866">
    <property type="entry name" value="CPSASE_1"/>
    <property type="match status" value="2"/>
</dbReference>
<dbReference type="PROSITE" id="PS00867">
    <property type="entry name" value="CPSASE_2"/>
    <property type="match status" value="2"/>
</dbReference>
<dbReference type="PROSITE" id="PS51855">
    <property type="entry name" value="MGS"/>
    <property type="match status" value="1"/>
</dbReference>
<feature type="chain" id="PRO_1000138882" description="Carbamoyl phosphate synthase large chain">
    <location>
        <begin position="1"/>
        <end position="1072"/>
    </location>
</feature>
<feature type="domain" description="ATP-grasp 1" evidence="1">
    <location>
        <begin position="133"/>
        <end position="327"/>
    </location>
</feature>
<feature type="domain" description="ATP-grasp 2" evidence="1">
    <location>
        <begin position="671"/>
        <end position="861"/>
    </location>
</feature>
<feature type="domain" description="MGS-like" evidence="1">
    <location>
        <begin position="930"/>
        <end position="1072"/>
    </location>
</feature>
<feature type="region of interest" description="Carboxyphosphate synthetic domain" evidence="1">
    <location>
        <begin position="1"/>
        <end position="401"/>
    </location>
</feature>
<feature type="region of interest" description="Oligomerization domain" evidence="1">
    <location>
        <begin position="402"/>
        <end position="546"/>
    </location>
</feature>
<feature type="region of interest" description="Carbamoyl phosphate synthetic domain" evidence="1">
    <location>
        <begin position="547"/>
        <end position="929"/>
    </location>
</feature>
<feature type="region of interest" description="Allosteric domain" evidence="1">
    <location>
        <begin position="930"/>
        <end position="1072"/>
    </location>
</feature>
<feature type="binding site" evidence="1">
    <location>
        <position position="129"/>
    </location>
    <ligand>
        <name>ATP</name>
        <dbReference type="ChEBI" id="CHEBI:30616"/>
        <label>1</label>
    </ligand>
</feature>
<feature type="binding site" evidence="1">
    <location>
        <position position="169"/>
    </location>
    <ligand>
        <name>ATP</name>
        <dbReference type="ChEBI" id="CHEBI:30616"/>
        <label>1</label>
    </ligand>
</feature>
<feature type="binding site" evidence="1">
    <location>
        <position position="175"/>
    </location>
    <ligand>
        <name>ATP</name>
        <dbReference type="ChEBI" id="CHEBI:30616"/>
        <label>1</label>
    </ligand>
</feature>
<feature type="binding site" evidence="1">
    <location>
        <position position="176"/>
    </location>
    <ligand>
        <name>ATP</name>
        <dbReference type="ChEBI" id="CHEBI:30616"/>
        <label>1</label>
    </ligand>
</feature>
<feature type="binding site" evidence="1">
    <location>
        <position position="208"/>
    </location>
    <ligand>
        <name>ATP</name>
        <dbReference type="ChEBI" id="CHEBI:30616"/>
        <label>1</label>
    </ligand>
</feature>
<feature type="binding site" evidence="1">
    <location>
        <position position="210"/>
    </location>
    <ligand>
        <name>ATP</name>
        <dbReference type="ChEBI" id="CHEBI:30616"/>
        <label>1</label>
    </ligand>
</feature>
<feature type="binding site" evidence="1">
    <location>
        <position position="215"/>
    </location>
    <ligand>
        <name>ATP</name>
        <dbReference type="ChEBI" id="CHEBI:30616"/>
        <label>1</label>
    </ligand>
</feature>
<feature type="binding site" evidence="1">
    <location>
        <position position="241"/>
    </location>
    <ligand>
        <name>ATP</name>
        <dbReference type="ChEBI" id="CHEBI:30616"/>
        <label>1</label>
    </ligand>
</feature>
<feature type="binding site" evidence="1">
    <location>
        <position position="242"/>
    </location>
    <ligand>
        <name>ATP</name>
        <dbReference type="ChEBI" id="CHEBI:30616"/>
        <label>1</label>
    </ligand>
</feature>
<feature type="binding site" evidence="1">
    <location>
        <position position="243"/>
    </location>
    <ligand>
        <name>ATP</name>
        <dbReference type="ChEBI" id="CHEBI:30616"/>
        <label>1</label>
    </ligand>
</feature>
<feature type="binding site" evidence="1">
    <location>
        <position position="284"/>
    </location>
    <ligand>
        <name>ATP</name>
        <dbReference type="ChEBI" id="CHEBI:30616"/>
        <label>1</label>
    </ligand>
</feature>
<feature type="binding site" evidence="1">
    <location>
        <position position="284"/>
    </location>
    <ligand>
        <name>Mg(2+)</name>
        <dbReference type="ChEBI" id="CHEBI:18420"/>
        <label>1</label>
    </ligand>
</feature>
<feature type="binding site" evidence="1">
    <location>
        <position position="284"/>
    </location>
    <ligand>
        <name>Mn(2+)</name>
        <dbReference type="ChEBI" id="CHEBI:29035"/>
        <label>1</label>
    </ligand>
</feature>
<feature type="binding site" evidence="1">
    <location>
        <position position="298"/>
    </location>
    <ligand>
        <name>ATP</name>
        <dbReference type="ChEBI" id="CHEBI:30616"/>
        <label>1</label>
    </ligand>
</feature>
<feature type="binding site" evidence="1">
    <location>
        <position position="298"/>
    </location>
    <ligand>
        <name>Mg(2+)</name>
        <dbReference type="ChEBI" id="CHEBI:18420"/>
        <label>1</label>
    </ligand>
</feature>
<feature type="binding site" evidence="1">
    <location>
        <position position="298"/>
    </location>
    <ligand>
        <name>Mg(2+)</name>
        <dbReference type="ChEBI" id="CHEBI:18420"/>
        <label>2</label>
    </ligand>
</feature>
<feature type="binding site" evidence="1">
    <location>
        <position position="298"/>
    </location>
    <ligand>
        <name>Mn(2+)</name>
        <dbReference type="ChEBI" id="CHEBI:29035"/>
        <label>1</label>
    </ligand>
</feature>
<feature type="binding site" evidence="1">
    <location>
        <position position="298"/>
    </location>
    <ligand>
        <name>Mn(2+)</name>
        <dbReference type="ChEBI" id="CHEBI:29035"/>
        <label>2</label>
    </ligand>
</feature>
<feature type="binding site" evidence="1">
    <location>
        <position position="300"/>
    </location>
    <ligand>
        <name>Mg(2+)</name>
        <dbReference type="ChEBI" id="CHEBI:18420"/>
        <label>2</label>
    </ligand>
</feature>
<feature type="binding site" evidence="1">
    <location>
        <position position="300"/>
    </location>
    <ligand>
        <name>Mn(2+)</name>
        <dbReference type="ChEBI" id="CHEBI:29035"/>
        <label>2</label>
    </ligand>
</feature>
<feature type="binding site" evidence="1">
    <location>
        <position position="707"/>
    </location>
    <ligand>
        <name>ATP</name>
        <dbReference type="ChEBI" id="CHEBI:30616"/>
        <label>2</label>
    </ligand>
</feature>
<feature type="binding site" evidence="1">
    <location>
        <position position="746"/>
    </location>
    <ligand>
        <name>ATP</name>
        <dbReference type="ChEBI" id="CHEBI:30616"/>
        <label>2</label>
    </ligand>
</feature>
<feature type="binding site" evidence="1">
    <location>
        <position position="752"/>
    </location>
    <ligand>
        <name>ATP</name>
        <dbReference type="ChEBI" id="CHEBI:30616"/>
        <label>2</label>
    </ligand>
</feature>
<feature type="binding site" evidence="1">
    <location>
        <position position="777"/>
    </location>
    <ligand>
        <name>ATP</name>
        <dbReference type="ChEBI" id="CHEBI:30616"/>
        <label>2</label>
    </ligand>
</feature>
<feature type="binding site" evidence="1">
    <location>
        <position position="778"/>
    </location>
    <ligand>
        <name>ATP</name>
        <dbReference type="ChEBI" id="CHEBI:30616"/>
        <label>2</label>
    </ligand>
</feature>
<feature type="binding site" evidence="1">
    <location>
        <position position="779"/>
    </location>
    <ligand>
        <name>ATP</name>
        <dbReference type="ChEBI" id="CHEBI:30616"/>
        <label>2</label>
    </ligand>
</feature>
<feature type="binding site" evidence="1">
    <location>
        <position position="780"/>
    </location>
    <ligand>
        <name>ATP</name>
        <dbReference type="ChEBI" id="CHEBI:30616"/>
        <label>2</label>
    </ligand>
</feature>
<feature type="binding site" evidence="1">
    <location>
        <position position="820"/>
    </location>
    <ligand>
        <name>ATP</name>
        <dbReference type="ChEBI" id="CHEBI:30616"/>
        <label>2</label>
    </ligand>
</feature>
<feature type="binding site" evidence="1">
    <location>
        <position position="820"/>
    </location>
    <ligand>
        <name>Mg(2+)</name>
        <dbReference type="ChEBI" id="CHEBI:18420"/>
        <label>3</label>
    </ligand>
</feature>
<feature type="binding site" evidence="1">
    <location>
        <position position="820"/>
    </location>
    <ligand>
        <name>Mn(2+)</name>
        <dbReference type="ChEBI" id="CHEBI:29035"/>
        <label>3</label>
    </ligand>
</feature>
<feature type="binding site" evidence="1">
    <location>
        <position position="832"/>
    </location>
    <ligand>
        <name>ATP</name>
        <dbReference type="ChEBI" id="CHEBI:30616"/>
        <label>2</label>
    </ligand>
</feature>
<feature type="binding site" evidence="1">
    <location>
        <position position="832"/>
    </location>
    <ligand>
        <name>Mg(2+)</name>
        <dbReference type="ChEBI" id="CHEBI:18420"/>
        <label>3</label>
    </ligand>
</feature>
<feature type="binding site" evidence="1">
    <location>
        <position position="832"/>
    </location>
    <ligand>
        <name>Mg(2+)</name>
        <dbReference type="ChEBI" id="CHEBI:18420"/>
        <label>4</label>
    </ligand>
</feature>
<feature type="binding site" evidence="1">
    <location>
        <position position="832"/>
    </location>
    <ligand>
        <name>Mn(2+)</name>
        <dbReference type="ChEBI" id="CHEBI:29035"/>
        <label>3</label>
    </ligand>
</feature>
<feature type="binding site" evidence="1">
    <location>
        <position position="832"/>
    </location>
    <ligand>
        <name>Mn(2+)</name>
        <dbReference type="ChEBI" id="CHEBI:29035"/>
        <label>4</label>
    </ligand>
</feature>
<feature type="binding site" evidence="1">
    <location>
        <position position="834"/>
    </location>
    <ligand>
        <name>Mg(2+)</name>
        <dbReference type="ChEBI" id="CHEBI:18420"/>
        <label>4</label>
    </ligand>
</feature>
<feature type="binding site" evidence="1">
    <location>
        <position position="834"/>
    </location>
    <ligand>
        <name>Mn(2+)</name>
        <dbReference type="ChEBI" id="CHEBI:29035"/>
        <label>4</label>
    </ligand>
</feature>
<keyword id="KW-0028">Amino-acid biosynthesis</keyword>
<keyword id="KW-0055">Arginine biosynthesis</keyword>
<keyword id="KW-0067">ATP-binding</keyword>
<keyword id="KW-0436">Ligase</keyword>
<keyword id="KW-0460">Magnesium</keyword>
<keyword id="KW-0464">Manganese</keyword>
<keyword id="KW-0479">Metal-binding</keyword>
<keyword id="KW-0547">Nucleotide-binding</keyword>
<keyword id="KW-0665">Pyrimidine biosynthesis</keyword>
<keyword id="KW-0677">Repeat</keyword>
<accession>B7H6M2</accession>
<protein>
    <recommendedName>
        <fullName evidence="1">Carbamoyl phosphate synthase large chain</fullName>
        <ecNumber evidence="1">6.3.4.16</ecNumber>
        <ecNumber evidence="1">6.3.5.5</ecNumber>
    </recommendedName>
    <alternativeName>
        <fullName evidence="1">Carbamoyl phosphate synthetase ammonia chain</fullName>
    </alternativeName>
</protein>
<comment type="function">
    <text evidence="1">Large subunit of the glutamine-dependent carbamoyl phosphate synthetase (CPSase). CPSase catalyzes the formation of carbamoyl phosphate from the ammonia moiety of glutamine, carbonate, and phosphate donated by ATP, constituting the first step of 2 biosynthetic pathways, one leading to arginine and/or urea and the other to pyrimidine nucleotides. The large subunit (synthetase) binds the substrates ammonia (free or transferred from glutamine from the small subunit), hydrogencarbonate and ATP and carries out an ATP-coupled ligase reaction, activating hydrogencarbonate by forming carboxy phosphate which reacts with ammonia to form carbamoyl phosphate.</text>
</comment>
<comment type="catalytic activity">
    <reaction evidence="1">
        <text>hydrogencarbonate + L-glutamine + 2 ATP + H2O = carbamoyl phosphate + L-glutamate + 2 ADP + phosphate + 2 H(+)</text>
        <dbReference type="Rhea" id="RHEA:18633"/>
        <dbReference type="ChEBI" id="CHEBI:15377"/>
        <dbReference type="ChEBI" id="CHEBI:15378"/>
        <dbReference type="ChEBI" id="CHEBI:17544"/>
        <dbReference type="ChEBI" id="CHEBI:29985"/>
        <dbReference type="ChEBI" id="CHEBI:30616"/>
        <dbReference type="ChEBI" id="CHEBI:43474"/>
        <dbReference type="ChEBI" id="CHEBI:58228"/>
        <dbReference type="ChEBI" id="CHEBI:58359"/>
        <dbReference type="ChEBI" id="CHEBI:456216"/>
        <dbReference type="EC" id="6.3.5.5"/>
    </reaction>
</comment>
<comment type="catalytic activity">
    <molecule>Carbamoyl phosphate synthase large chain</molecule>
    <reaction evidence="1">
        <text>hydrogencarbonate + NH4(+) + 2 ATP = carbamoyl phosphate + 2 ADP + phosphate + 2 H(+)</text>
        <dbReference type="Rhea" id="RHEA:18029"/>
        <dbReference type="ChEBI" id="CHEBI:15378"/>
        <dbReference type="ChEBI" id="CHEBI:17544"/>
        <dbReference type="ChEBI" id="CHEBI:28938"/>
        <dbReference type="ChEBI" id="CHEBI:30616"/>
        <dbReference type="ChEBI" id="CHEBI:43474"/>
        <dbReference type="ChEBI" id="CHEBI:58228"/>
        <dbReference type="ChEBI" id="CHEBI:456216"/>
        <dbReference type="EC" id="6.3.4.16"/>
    </reaction>
</comment>
<comment type="cofactor">
    <cofactor evidence="1">
        <name>Mg(2+)</name>
        <dbReference type="ChEBI" id="CHEBI:18420"/>
    </cofactor>
    <cofactor evidence="1">
        <name>Mn(2+)</name>
        <dbReference type="ChEBI" id="CHEBI:29035"/>
    </cofactor>
    <text evidence="1">Binds 4 Mg(2+) or Mn(2+) ions per subunit.</text>
</comment>
<comment type="pathway">
    <text evidence="1">Amino-acid biosynthesis; L-arginine biosynthesis; carbamoyl phosphate from bicarbonate: step 1/1.</text>
</comment>
<comment type="pathway">
    <text evidence="1">Pyrimidine metabolism; UMP biosynthesis via de novo pathway; (S)-dihydroorotate from bicarbonate: step 1/3.</text>
</comment>
<comment type="subunit">
    <text evidence="1">Composed of two chains; the small (or glutamine) chain promotes the hydrolysis of glutamine to ammonia, which is used by the large (or ammonia) chain to synthesize carbamoyl phosphate. Tetramer of heterodimers (alpha,beta)4.</text>
</comment>
<comment type="domain">
    <text evidence="1">The large subunit is composed of 2 ATP-grasp domains that are involved in binding the 2 ATP molecules needed for carbamoyl phosphate synthesis. The N-terminal ATP-grasp domain (referred to as the carboxyphosphate synthetic component) catalyzes the ATP-dependent phosphorylation of hydrogencarbonate to carboxyphosphate and the subsequent nucleophilic attack by ammonia to form a carbamate intermediate. The C-terminal ATP-grasp domain (referred to as the carbamoyl phosphate synthetic component) then catalyzes the phosphorylation of carbamate with the second ATP to form the end product carbamoyl phosphate. The reactive and unstable enzyme intermediates are sequentially channeled from one active site to the next through the interior of the protein over a distance of at least 96 A.</text>
</comment>
<comment type="similarity">
    <text evidence="1">Belongs to the CarB family.</text>
</comment>
<name>CARB_BACC4</name>
<proteinExistence type="inferred from homology"/>